<keyword id="KW-1185">Reference proteome</keyword>
<dbReference type="EMBL" id="CR555306">
    <property type="protein sequence ID" value="CAI07079.1"/>
    <property type="molecule type" value="Genomic_DNA"/>
</dbReference>
<dbReference type="RefSeq" id="WP_011236804.1">
    <property type="nucleotide sequence ID" value="NC_006513.1"/>
</dbReference>
<dbReference type="SMR" id="Q5P6I2"/>
<dbReference type="STRING" id="76114.ebA1762"/>
<dbReference type="KEGG" id="eba:ebA1762"/>
<dbReference type="eggNOG" id="COG1872">
    <property type="taxonomic scope" value="Bacteria"/>
</dbReference>
<dbReference type="HOGENOM" id="CLU_130694_6_0_4"/>
<dbReference type="OrthoDB" id="9800587at2"/>
<dbReference type="Proteomes" id="UP000006552">
    <property type="component" value="Chromosome"/>
</dbReference>
<dbReference type="GO" id="GO:0005737">
    <property type="term" value="C:cytoplasm"/>
    <property type="evidence" value="ECO:0007669"/>
    <property type="project" value="TreeGrafter"/>
</dbReference>
<dbReference type="Gene3D" id="3.30.1200.10">
    <property type="entry name" value="YggU-like"/>
    <property type="match status" value="1"/>
</dbReference>
<dbReference type="HAMAP" id="MF_00634">
    <property type="entry name" value="UPF0235"/>
    <property type="match status" value="1"/>
</dbReference>
<dbReference type="InterPro" id="IPR003746">
    <property type="entry name" value="DUF167"/>
</dbReference>
<dbReference type="InterPro" id="IPR036591">
    <property type="entry name" value="YggU-like_sf"/>
</dbReference>
<dbReference type="NCBIfam" id="TIGR00251">
    <property type="entry name" value="DUF167 family protein"/>
    <property type="match status" value="1"/>
</dbReference>
<dbReference type="PANTHER" id="PTHR13420">
    <property type="entry name" value="UPF0235 PROTEIN C15ORF40"/>
    <property type="match status" value="1"/>
</dbReference>
<dbReference type="PANTHER" id="PTHR13420:SF7">
    <property type="entry name" value="UPF0235 PROTEIN C15ORF40"/>
    <property type="match status" value="1"/>
</dbReference>
<dbReference type="Pfam" id="PF02594">
    <property type="entry name" value="DUF167"/>
    <property type="match status" value="1"/>
</dbReference>
<dbReference type="SMART" id="SM01152">
    <property type="entry name" value="DUF167"/>
    <property type="match status" value="1"/>
</dbReference>
<dbReference type="SUPFAM" id="SSF69786">
    <property type="entry name" value="YggU-like"/>
    <property type="match status" value="1"/>
</dbReference>
<proteinExistence type="inferred from homology"/>
<name>Y954_AROAE</name>
<protein>
    <recommendedName>
        <fullName evidence="1">UPF0235 protein AZOSEA09540</fullName>
    </recommendedName>
</protein>
<comment type="similarity">
    <text evidence="1">Belongs to the UPF0235 family.</text>
</comment>
<accession>Q5P6I2</accession>
<reference key="1">
    <citation type="journal article" date="2005" name="Arch. Microbiol.">
        <title>The genome sequence of an anaerobic aromatic-degrading denitrifying bacterium, strain EbN1.</title>
        <authorList>
            <person name="Rabus R."/>
            <person name="Kube M."/>
            <person name="Heider J."/>
            <person name="Beck A."/>
            <person name="Heitmann K."/>
            <person name="Widdel F."/>
            <person name="Reinhardt R."/>
        </authorList>
    </citation>
    <scope>NUCLEOTIDE SEQUENCE [LARGE SCALE GENOMIC DNA]</scope>
    <source>
        <strain>DSM 19018 / LMG 30748 / EbN1</strain>
    </source>
</reference>
<organism>
    <name type="scientific">Aromatoleum aromaticum (strain DSM 19018 / LMG 30748 / EbN1)</name>
    <name type="common">Azoarcus sp. (strain EbN1)</name>
    <dbReference type="NCBI Taxonomy" id="76114"/>
    <lineage>
        <taxon>Bacteria</taxon>
        <taxon>Pseudomonadati</taxon>
        <taxon>Pseudomonadota</taxon>
        <taxon>Betaproteobacteria</taxon>
        <taxon>Rhodocyclales</taxon>
        <taxon>Rhodocyclaceae</taxon>
        <taxon>Aromatoleum</taxon>
    </lineage>
</organism>
<sequence>MDWLREAADGSLVLSLHVQPGAKKTEFVGPHGEAMKLRLAAPPVDGKANAALTVFLAAFCGVGRSAVSLLSGETSRAKRVRIEGAGSEALARLRALG</sequence>
<feature type="chain" id="PRO_1000147338" description="UPF0235 protein AZOSEA09540">
    <location>
        <begin position="1"/>
        <end position="97"/>
    </location>
</feature>
<gene>
    <name type="ordered locus">AZOSEA09540</name>
    <name type="ORF">ebA1762</name>
</gene>
<evidence type="ECO:0000255" key="1">
    <source>
        <dbReference type="HAMAP-Rule" id="MF_00634"/>
    </source>
</evidence>